<organism>
    <name type="scientific">Talaromyces marneffei (strain ATCC 18224 / CBS 334.59 / QM 7333)</name>
    <name type="common">Penicillium marneffei</name>
    <dbReference type="NCBI Taxonomy" id="441960"/>
    <lineage>
        <taxon>Eukaryota</taxon>
        <taxon>Fungi</taxon>
        <taxon>Dikarya</taxon>
        <taxon>Ascomycota</taxon>
        <taxon>Pezizomycotina</taxon>
        <taxon>Eurotiomycetes</taxon>
        <taxon>Eurotiomycetidae</taxon>
        <taxon>Eurotiales</taxon>
        <taxon>Trichocomaceae</taxon>
        <taxon>Talaromyces</taxon>
        <taxon>Talaromyces sect. Talaromyces</taxon>
    </lineage>
</organism>
<gene>
    <name evidence="1" type="primary">cyn1</name>
    <name type="ORF">PMAA_038500</name>
</gene>
<dbReference type="EC" id="4.2.1.104" evidence="1"/>
<dbReference type="EMBL" id="DS995899">
    <property type="protein sequence ID" value="EEA29067.1"/>
    <property type="molecule type" value="Genomic_DNA"/>
</dbReference>
<dbReference type="RefSeq" id="XP_002145582.1">
    <property type="nucleotide sequence ID" value="XM_002145546.1"/>
</dbReference>
<dbReference type="SMR" id="B6Q2W9"/>
<dbReference type="STRING" id="441960.B6Q2W9"/>
<dbReference type="VEuPathDB" id="FungiDB:PMAA_038500"/>
<dbReference type="HOGENOM" id="CLU_103452_0_0_1"/>
<dbReference type="OrthoDB" id="1998at28568"/>
<dbReference type="PhylomeDB" id="B6Q2W9"/>
<dbReference type="Proteomes" id="UP000001294">
    <property type="component" value="Unassembled WGS sequence"/>
</dbReference>
<dbReference type="GO" id="GO:0008824">
    <property type="term" value="F:cyanate hydratase activity"/>
    <property type="evidence" value="ECO:0007669"/>
    <property type="project" value="UniProtKB-UniRule"/>
</dbReference>
<dbReference type="GO" id="GO:0003677">
    <property type="term" value="F:DNA binding"/>
    <property type="evidence" value="ECO:0007669"/>
    <property type="project" value="InterPro"/>
</dbReference>
<dbReference type="GO" id="GO:0009439">
    <property type="term" value="P:cyanate metabolic process"/>
    <property type="evidence" value="ECO:0007669"/>
    <property type="project" value="UniProtKB-UniRule"/>
</dbReference>
<dbReference type="CDD" id="cd00559">
    <property type="entry name" value="Cyanase_C"/>
    <property type="match status" value="1"/>
</dbReference>
<dbReference type="Gene3D" id="3.30.1160.10">
    <property type="entry name" value="Cyanate lyase, C-terminal domain"/>
    <property type="match status" value="1"/>
</dbReference>
<dbReference type="Gene3D" id="1.10.260.40">
    <property type="entry name" value="lambda repressor-like DNA-binding domains"/>
    <property type="match status" value="1"/>
</dbReference>
<dbReference type="HAMAP" id="MF_00535">
    <property type="entry name" value="Cyanate_hydrat"/>
    <property type="match status" value="1"/>
</dbReference>
<dbReference type="InterPro" id="IPR008076">
    <property type="entry name" value="Cyanase"/>
</dbReference>
<dbReference type="InterPro" id="IPR003712">
    <property type="entry name" value="Cyanate_lyase_C"/>
</dbReference>
<dbReference type="InterPro" id="IPR036581">
    <property type="entry name" value="Cyanate_lyase_C_sf"/>
</dbReference>
<dbReference type="InterPro" id="IPR010982">
    <property type="entry name" value="Lambda_DNA-bd_dom_sf"/>
</dbReference>
<dbReference type="NCBIfam" id="TIGR00673">
    <property type="entry name" value="cynS"/>
    <property type="match status" value="1"/>
</dbReference>
<dbReference type="PANTHER" id="PTHR34186">
    <property type="entry name" value="CYANATE HYDRATASE"/>
    <property type="match status" value="1"/>
</dbReference>
<dbReference type="PANTHER" id="PTHR34186:SF2">
    <property type="entry name" value="CYANATE HYDRATASE"/>
    <property type="match status" value="1"/>
</dbReference>
<dbReference type="Pfam" id="PF02560">
    <property type="entry name" value="Cyanate_lyase"/>
    <property type="match status" value="1"/>
</dbReference>
<dbReference type="PIRSF" id="PIRSF001263">
    <property type="entry name" value="Cyanate_hydratas"/>
    <property type="match status" value="1"/>
</dbReference>
<dbReference type="PRINTS" id="PR01693">
    <property type="entry name" value="CYANASE"/>
</dbReference>
<dbReference type="SMART" id="SM01116">
    <property type="entry name" value="Cyanate_lyase"/>
    <property type="match status" value="1"/>
</dbReference>
<dbReference type="SUPFAM" id="SSF55234">
    <property type="entry name" value="Cyanase C-terminal domain"/>
    <property type="match status" value="1"/>
</dbReference>
<dbReference type="SUPFAM" id="SSF47413">
    <property type="entry name" value="lambda repressor-like DNA-binding domains"/>
    <property type="match status" value="1"/>
</dbReference>
<proteinExistence type="inferred from homology"/>
<name>CYNS_TALMQ</name>
<keyword id="KW-0456">Lyase</keyword>
<keyword id="KW-1185">Reference proteome</keyword>
<protein>
    <recommendedName>
        <fullName evidence="1">Cyanate hydratase</fullName>
        <shortName evidence="1">Cyanase</shortName>
        <ecNumber evidence="1">4.2.1.104</ecNumber>
    </recommendedName>
    <alternativeName>
        <fullName evidence="1">Cyanate hydrolase</fullName>
    </alternativeName>
    <alternativeName>
        <fullName evidence="1">Cyanate lyase</fullName>
    </alternativeName>
</protein>
<sequence length="163" mass="18285">MSHLNIATLDASQHPYLPASSQTLFAAKAKKKLSFEEISQEIGRNEVATAAIFYGQAKASPEDITNLSKALDIPYELLEEQLSGFPDRGRSVEMPPREPLIYRLFEIVQNYGYAYKAVLNEKFGDGIMSAISFSTKVEKETDADGNNWAVITLRGKWLPFSRY</sequence>
<comment type="function">
    <text evidence="1">Catalyzes the reaction of cyanate with bicarbonate to produce ammonia and carbon dioxide.</text>
</comment>
<comment type="catalytic activity">
    <reaction evidence="1">
        <text>cyanate + hydrogencarbonate + 3 H(+) = NH4(+) + 2 CO2</text>
        <dbReference type="Rhea" id="RHEA:11120"/>
        <dbReference type="ChEBI" id="CHEBI:15378"/>
        <dbReference type="ChEBI" id="CHEBI:16526"/>
        <dbReference type="ChEBI" id="CHEBI:17544"/>
        <dbReference type="ChEBI" id="CHEBI:28938"/>
        <dbReference type="ChEBI" id="CHEBI:29195"/>
        <dbReference type="EC" id="4.2.1.104"/>
    </reaction>
</comment>
<comment type="similarity">
    <text evidence="1">Belongs to the cyanase family.</text>
</comment>
<accession>B6Q2W9</accession>
<reference key="1">
    <citation type="journal article" date="2015" name="Genome Announc.">
        <title>Genome sequence of the AIDS-associated pathogen Penicillium marneffei (ATCC18224) and its near taxonomic relative Talaromyces stipitatus (ATCC10500).</title>
        <authorList>
            <person name="Nierman W.C."/>
            <person name="Fedorova-Abrams N.D."/>
            <person name="Andrianopoulos A."/>
        </authorList>
    </citation>
    <scope>NUCLEOTIDE SEQUENCE [LARGE SCALE GENOMIC DNA]</scope>
    <source>
        <strain>ATCC 18224 / CBS 334.59 / QM 7333</strain>
    </source>
</reference>
<evidence type="ECO:0000255" key="1">
    <source>
        <dbReference type="HAMAP-Rule" id="MF_03139"/>
    </source>
</evidence>
<feature type="chain" id="PRO_0000403262" description="Cyanate hydratase">
    <location>
        <begin position="1"/>
        <end position="163"/>
    </location>
</feature>
<feature type="active site" evidence="1">
    <location>
        <position position="103"/>
    </location>
</feature>
<feature type="active site" evidence="1">
    <location>
        <position position="106"/>
    </location>
</feature>
<feature type="active site" evidence="1">
    <location>
        <position position="129"/>
    </location>
</feature>